<reference key="1">
    <citation type="journal article" date="2013" name="Plant Physiol.">
        <title>Evolution of conifer diterpene synthases: diterpene resin acid biosynthesis in lodgepole pine and jack pine involves monofunctional and bifunctional diterpene synthases.</title>
        <authorList>
            <person name="Hall D.E."/>
            <person name="Zerbe P."/>
            <person name="Jancsik S."/>
            <person name="Quesada A.L."/>
            <person name="Dullat H."/>
            <person name="Madilao L.L."/>
            <person name="Yuen M."/>
            <person name="Bohlmann J."/>
        </authorList>
    </citation>
    <scope>NUCLEOTIDE SEQUENCE [MRNA]</scope>
    <scope>FUNCTION</scope>
    <scope>CATALYTIC ACTIVITY</scope>
</reference>
<protein>
    <recommendedName>
        <fullName evidence="6">Bifunctional levopimaradiene synthase, chloroplastic</fullName>
        <shortName evidence="6">PcLAS2</shortName>
    </recommendedName>
    <alternativeName>
        <fullName>Diterpene synthase</fullName>
    </alternativeName>
    <domain>
        <recommendedName>
            <fullName>Levopimaradiene synthase</fullName>
            <ecNumber evidence="5">4.2.3.32</ecNumber>
        </recommendedName>
        <alternativeName>
            <fullName>Abieta-7,13-diene synthase</fullName>
            <ecNumber evidence="5">4.2.3.18</ecNumber>
        </alternativeName>
        <alternativeName>
            <fullName>Neoabietadiene synthase</fullName>
            <ecNumber evidence="5">4.2.3.132</ecNumber>
        </alternativeName>
    </domain>
    <domain>
        <recommendedName>
            <fullName>Copalyl diphosphate synthase</fullName>
            <ecNumber evidence="5">5.5.1.12</ecNumber>
        </recommendedName>
    </domain>
</protein>
<accession>M4HYC6</accession>
<feature type="transit peptide" description="Chloroplast" evidence="4">
    <location>
        <begin position="1"/>
        <end position="52"/>
    </location>
</feature>
<feature type="chain" id="PRO_0000431417" description="Bifunctional levopimaradiene synthase, chloroplastic">
    <location>
        <begin position="53"/>
        <end position="850"/>
    </location>
</feature>
<feature type="short sequence motif" description="DXDD motif" evidence="7">
    <location>
        <begin position="383"/>
        <end position="386"/>
    </location>
</feature>
<feature type="short sequence motif" description="DDXXD motif" evidence="7">
    <location>
        <begin position="602"/>
        <end position="606"/>
    </location>
</feature>
<feature type="binding site" evidence="2">
    <location>
        <position position="250"/>
    </location>
    <ligand>
        <name>substrate</name>
    </ligand>
</feature>
<feature type="binding site" evidence="1">
    <location>
        <position position="383"/>
    </location>
    <ligand>
        <name>Mg(2+)</name>
        <dbReference type="ChEBI" id="CHEBI:18420"/>
        <label>4</label>
    </ligand>
</feature>
<feature type="binding site" evidence="1">
    <location>
        <position position="385"/>
    </location>
    <ligand>
        <name>Mg(2+)</name>
        <dbReference type="ChEBI" id="CHEBI:18420"/>
        <label>4</label>
    </ligand>
</feature>
<feature type="binding site" evidence="2">
    <location>
        <position position="470"/>
    </location>
    <ligand>
        <name>substrate</name>
    </ligand>
</feature>
<feature type="binding site" evidence="3">
    <location>
        <position position="602"/>
    </location>
    <ligand>
        <name>Mg(2+)</name>
        <dbReference type="ChEBI" id="CHEBI:18420"/>
        <label>1</label>
    </ligand>
</feature>
<feature type="binding site" evidence="3">
    <location>
        <position position="602"/>
    </location>
    <ligand>
        <name>Mg(2+)</name>
        <dbReference type="ChEBI" id="CHEBI:18420"/>
        <label>2</label>
    </ligand>
</feature>
<feature type="binding site" evidence="3">
    <location>
        <position position="606"/>
    </location>
    <ligand>
        <name>Mg(2+)</name>
        <dbReference type="ChEBI" id="CHEBI:18420"/>
        <label>1</label>
    </ligand>
</feature>
<feature type="binding site" evidence="3">
    <location>
        <position position="606"/>
    </location>
    <ligand>
        <name>Mg(2+)</name>
        <dbReference type="ChEBI" id="CHEBI:18420"/>
        <label>2</label>
    </ligand>
</feature>
<feature type="binding site" evidence="3">
    <location>
        <position position="746"/>
    </location>
    <ligand>
        <name>Mg(2+)</name>
        <dbReference type="ChEBI" id="CHEBI:18420"/>
        <label>3</label>
    </ligand>
</feature>
<feature type="binding site" evidence="3">
    <location>
        <position position="750"/>
    </location>
    <ligand>
        <name>Mg(2+)</name>
        <dbReference type="ChEBI" id="CHEBI:18420"/>
        <label>3</label>
    </ligand>
</feature>
<feature type="binding site" evidence="3">
    <location>
        <position position="754"/>
    </location>
    <ligand>
        <name>Mg(2+)</name>
        <dbReference type="ChEBI" id="CHEBI:18420"/>
        <label>3</label>
    </ligand>
</feature>
<proteinExistence type="evidence at protein level"/>
<gene>
    <name evidence="6" type="primary">TPS-LAS2</name>
</gene>
<comment type="function">
    <text evidence="5">Involved in defensive oleoresin formation in conifers in response to insect attack or other injury. Involved in diterpene (C20) olefins biosynthesis. Bifunctional enzyme that catalyzes two sequential cyclizations of geranylgeranyl diphosphate (GGPP) to levopimaradiene. Levopimaradiene is the major products of the enzyme with abietadiene and neoabietadiene. No activity with farnesyl diphosphate (FPP) as substrate.</text>
</comment>
<comment type="catalytic activity">
    <reaction evidence="5">
        <text>(2E,6E,10E)-geranylgeranyl diphosphate = (+)-copalyl diphosphate</text>
        <dbReference type="Rhea" id="RHEA:24316"/>
        <dbReference type="ChEBI" id="CHEBI:58635"/>
        <dbReference type="ChEBI" id="CHEBI:58756"/>
        <dbReference type="EC" id="5.5.1.12"/>
    </reaction>
</comment>
<comment type="catalytic activity">
    <reaction evidence="5">
        <text>(+)-copalyl diphosphate = abieta-7,13-diene + diphosphate</text>
        <dbReference type="Rhea" id="RHEA:13873"/>
        <dbReference type="ChEBI" id="CHEBI:30232"/>
        <dbReference type="ChEBI" id="CHEBI:33019"/>
        <dbReference type="ChEBI" id="CHEBI:58635"/>
        <dbReference type="EC" id="4.2.3.18"/>
    </reaction>
</comment>
<comment type="catalytic activity">
    <reaction evidence="5">
        <text>(+)-copalyl diphosphate = abieta-8(14),12-diene + diphosphate</text>
        <dbReference type="Rhea" id="RHEA:25548"/>
        <dbReference type="ChEBI" id="CHEBI:29616"/>
        <dbReference type="ChEBI" id="CHEBI:33019"/>
        <dbReference type="ChEBI" id="CHEBI:58635"/>
        <dbReference type="EC" id="4.2.3.32"/>
    </reaction>
</comment>
<comment type="catalytic activity">
    <reaction evidence="5">
        <text>(+)-copalyl diphosphate = neoabietadiene + diphosphate</text>
        <dbReference type="Rhea" id="RHEA:33987"/>
        <dbReference type="ChEBI" id="CHEBI:29651"/>
        <dbReference type="ChEBI" id="CHEBI:33019"/>
        <dbReference type="ChEBI" id="CHEBI:58635"/>
        <dbReference type="EC" id="4.2.3.132"/>
    </reaction>
</comment>
<comment type="cofactor">
    <cofactor evidence="3">
        <name>Mg(2+)</name>
        <dbReference type="ChEBI" id="CHEBI:18420"/>
    </cofactor>
    <text evidence="3">Binds 3 Mg(2+) ions per subunit.</text>
</comment>
<comment type="pathway">
    <text evidence="7">Terpene metabolism; oleoresin biosynthesis.</text>
</comment>
<comment type="subcellular location">
    <subcellularLocation>
        <location evidence="4">Plastid</location>
        <location evidence="4">Chloroplast</location>
    </subcellularLocation>
</comment>
<comment type="domain">
    <text evidence="7">The Asp-Xaa-Asp-Asp (DXDD) motif is important for the catalytic activity in the class II active site relevant for the cyclization of GGPP. The Asp-Asp-Xaa-Xaa-Asp/Glu (DDXXD/E) motif is important for the catalytic activity in the class I active site, presumably through binding to Mg(2+).</text>
</comment>
<comment type="similarity">
    <text evidence="7">Belongs to the terpene synthase family. Tpsd subfamily.</text>
</comment>
<evidence type="ECO:0000250" key="1">
    <source>
        <dbReference type="UniProtKB" id="C7BKP9"/>
    </source>
</evidence>
<evidence type="ECO:0000250" key="2">
    <source>
        <dbReference type="UniProtKB" id="Q38802"/>
    </source>
</evidence>
<evidence type="ECO:0000250" key="3">
    <source>
        <dbReference type="UniProtKB" id="Q40577"/>
    </source>
</evidence>
<evidence type="ECO:0000255" key="4"/>
<evidence type="ECO:0000269" key="5">
    <source>
    </source>
</evidence>
<evidence type="ECO:0000303" key="6">
    <source>
    </source>
</evidence>
<evidence type="ECO:0000305" key="7"/>
<evidence type="ECO:0000312" key="8">
    <source>
        <dbReference type="EMBL" id="AFU73863.1"/>
    </source>
</evidence>
<name>TPSD2_PINCO</name>
<sequence length="850" mass="97780">MALPSSSLSSQIHTGATTQCIPHFHGSLNAGTSAGKRRSLYLRWGKGPSKIVACAGQDPFSVPTLVKREFPPGFWKDHVIESLMPSYKVAPSDEKRIETLITEIKNMFRSMGYGETNPSAYDTAWVARIPAVDGSEKPQFPETLEWILQNQLKDGSWGEEFYFLAYDRILATLACIITLTIWQTGDTQVQKGIEFFKTQAGKIEEEADSHRPSGFEIVFPAMLKEAKALGLALPYELPFIQQIIEKREAKLQRLPSDLLYALPTTLLYSLEGLQEIVDWEKIMKLQSKDRSFLSSPSSTAAVFMRTGNKKCLEFLNFVLKKFGNHVPCHYPLDLFERLWAVDTVERLGIDHHFKEEIKDALDYVYSHWDERGIGWARENPVPDIDDTAMGLRILRLHGYNVSSDVLKTFRDENGEFFCFLGQTQRGVTDMLNVNRCSHVAFPGETIMEEAKLCTERYLRNALEDTGAFDKWALKKNIRGEVEYALKYPWHRSMPRLEARSYIENYGPNDVWLGKTMYMMPNISNEKYLELAKLDFNRVQFFHRQELQDIRRWWNSSGFSQLGFTRERVAEIYFSPASFLFEPEFATCRAVYTKTSNFTVILDDLYDAHGTLDNLKLFSESVKRWDLSLVDQMPQDMKICFKGFYNTFNEIAEEGRKRQGRDVLSYIQKVWEVQLEAYTKEAEWSAVRYVPSYDEYIENASVSIALGTVVLISALFTGEILTDDILSKIGRDSRFLYLMGLTGRLVNDTKTYQAERGQGEVASAVQCYMKDHPEISEEEALKHVYTIMDNALDELNREFVNNRDVPDTCRRLVFETARIMQLFYMDGDGLTLSHNMEIKEHVKNCLFQPVA</sequence>
<dbReference type="EC" id="4.2.3.32" evidence="5"/>
<dbReference type="EC" id="4.2.3.18" evidence="5"/>
<dbReference type="EC" id="4.2.3.132" evidence="5"/>
<dbReference type="EC" id="5.5.1.12" evidence="5"/>
<dbReference type="EMBL" id="JQ240311">
    <property type="protein sequence ID" value="AFU73863.1"/>
    <property type="molecule type" value="mRNA"/>
</dbReference>
<dbReference type="SMR" id="M4HYC6"/>
<dbReference type="UniPathway" id="UPA00924"/>
<dbReference type="GO" id="GO:0009507">
    <property type="term" value="C:chloroplast"/>
    <property type="evidence" value="ECO:0007669"/>
    <property type="project" value="UniProtKB-SubCell"/>
</dbReference>
<dbReference type="GO" id="GO:0050554">
    <property type="term" value="F:abietadiene synthase activity"/>
    <property type="evidence" value="ECO:0007669"/>
    <property type="project" value="UniProtKB-EC"/>
</dbReference>
<dbReference type="GO" id="GO:0050559">
    <property type="term" value="F:copalyl diphosphate synthase activity"/>
    <property type="evidence" value="ECO:0007669"/>
    <property type="project" value="UniProtKB-EC"/>
</dbReference>
<dbReference type="GO" id="GO:0052678">
    <property type="term" value="F:levopimaradiene synthase activity"/>
    <property type="evidence" value="ECO:0007669"/>
    <property type="project" value="UniProtKB-EC"/>
</dbReference>
<dbReference type="GO" id="GO:0000287">
    <property type="term" value="F:magnesium ion binding"/>
    <property type="evidence" value="ECO:0007669"/>
    <property type="project" value="InterPro"/>
</dbReference>
<dbReference type="GO" id="GO:0010333">
    <property type="term" value="F:terpene synthase activity"/>
    <property type="evidence" value="ECO:0007669"/>
    <property type="project" value="InterPro"/>
</dbReference>
<dbReference type="GO" id="GO:0006952">
    <property type="term" value="P:defense response"/>
    <property type="evidence" value="ECO:0007669"/>
    <property type="project" value="UniProtKB-KW"/>
</dbReference>
<dbReference type="GO" id="GO:0016102">
    <property type="term" value="P:diterpenoid biosynthetic process"/>
    <property type="evidence" value="ECO:0007669"/>
    <property type="project" value="InterPro"/>
</dbReference>
<dbReference type="CDD" id="cd00684">
    <property type="entry name" value="Terpene_cyclase_plant_C1"/>
    <property type="match status" value="1"/>
</dbReference>
<dbReference type="FunFam" id="1.50.10.130:FF:000002">
    <property type="entry name" value="Ent-copalyl diphosphate synthase, chloroplastic"/>
    <property type="match status" value="1"/>
</dbReference>
<dbReference type="FunFam" id="1.10.600.10:FF:000005">
    <property type="entry name" value="Ent-kaur-16-ene synthase, chloroplastic"/>
    <property type="match status" value="1"/>
</dbReference>
<dbReference type="Gene3D" id="1.50.10.160">
    <property type="match status" value="1"/>
</dbReference>
<dbReference type="Gene3D" id="1.10.600.10">
    <property type="entry name" value="Farnesyl Diphosphate Synthase"/>
    <property type="match status" value="1"/>
</dbReference>
<dbReference type="Gene3D" id="1.50.10.130">
    <property type="entry name" value="Terpene synthase, N-terminal domain"/>
    <property type="match status" value="1"/>
</dbReference>
<dbReference type="InterPro" id="IPR008949">
    <property type="entry name" value="Isoprenoid_synthase_dom_sf"/>
</dbReference>
<dbReference type="InterPro" id="IPR034741">
    <property type="entry name" value="Terpene_cyclase-like_1_C"/>
</dbReference>
<dbReference type="InterPro" id="IPR044814">
    <property type="entry name" value="Terpene_cyclase_plant_C1"/>
</dbReference>
<dbReference type="InterPro" id="IPR001906">
    <property type="entry name" value="Terpene_synth_N"/>
</dbReference>
<dbReference type="InterPro" id="IPR036965">
    <property type="entry name" value="Terpene_synth_N_sf"/>
</dbReference>
<dbReference type="InterPro" id="IPR050148">
    <property type="entry name" value="Terpene_synthase-like"/>
</dbReference>
<dbReference type="InterPro" id="IPR005630">
    <property type="entry name" value="Terpene_synthase_metal-bd"/>
</dbReference>
<dbReference type="InterPro" id="IPR008930">
    <property type="entry name" value="Terpenoid_cyclase/PrenylTrfase"/>
</dbReference>
<dbReference type="PANTHER" id="PTHR31739:SF25">
    <property type="entry name" value="(E,E)-GERANYLLINALOOL SYNTHASE"/>
    <property type="match status" value="1"/>
</dbReference>
<dbReference type="PANTHER" id="PTHR31739">
    <property type="entry name" value="ENT-COPALYL DIPHOSPHATE SYNTHASE, CHLOROPLASTIC"/>
    <property type="match status" value="1"/>
</dbReference>
<dbReference type="Pfam" id="PF01397">
    <property type="entry name" value="Terpene_synth"/>
    <property type="match status" value="1"/>
</dbReference>
<dbReference type="Pfam" id="PF03936">
    <property type="entry name" value="Terpene_synth_C"/>
    <property type="match status" value="1"/>
</dbReference>
<dbReference type="SFLD" id="SFLDS00005">
    <property type="entry name" value="Isoprenoid_Synthase_Type_I"/>
    <property type="match status" value="1"/>
</dbReference>
<dbReference type="SFLD" id="SFLDG01019">
    <property type="entry name" value="Terpene_Cyclase_Like_1_C_Termi"/>
    <property type="match status" value="1"/>
</dbReference>
<dbReference type="SFLD" id="SFLDG01014">
    <property type="entry name" value="Terpene_Cyclase_Like_1_N-term"/>
    <property type="match status" value="1"/>
</dbReference>
<dbReference type="SFLD" id="SFLDG01605">
    <property type="entry name" value="Terpene_Cyclase_Like_1_N-term"/>
    <property type="match status" value="1"/>
</dbReference>
<dbReference type="SUPFAM" id="SSF48239">
    <property type="entry name" value="Terpenoid cyclases/Protein prenyltransferases"/>
    <property type="match status" value="2"/>
</dbReference>
<dbReference type="SUPFAM" id="SSF48576">
    <property type="entry name" value="Terpenoid synthases"/>
    <property type="match status" value="1"/>
</dbReference>
<organism evidence="8">
    <name type="scientific">Pinus contorta</name>
    <name type="common">Shore pine</name>
    <name type="synonym">Lodgepole pine</name>
    <dbReference type="NCBI Taxonomy" id="3339"/>
    <lineage>
        <taxon>Eukaryota</taxon>
        <taxon>Viridiplantae</taxon>
        <taxon>Streptophyta</taxon>
        <taxon>Embryophyta</taxon>
        <taxon>Tracheophyta</taxon>
        <taxon>Spermatophyta</taxon>
        <taxon>Pinopsida</taxon>
        <taxon>Pinidae</taxon>
        <taxon>Conifers I</taxon>
        <taxon>Pinales</taxon>
        <taxon>Pinaceae</taxon>
        <taxon>Pinus</taxon>
        <taxon>Pinus subgen. Pinus</taxon>
    </lineage>
</organism>
<keyword id="KW-0150">Chloroplast</keyword>
<keyword id="KW-0413">Isomerase</keyword>
<keyword id="KW-0456">Lyase</keyword>
<keyword id="KW-0460">Magnesium</keyword>
<keyword id="KW-0479">Metal-binding</keyword>
<keyword id="KW-0511">Multifunctional enzyme</keyword>
<keyword id="KW-0611">Plant defense</keyword>
<keyword id="KW-0934">Plastid</keyword>
<keyword id="KW-0809">Transit peptide</keyword>